<accession>B5Z2G9</accession>
<comment type="function">
    <text evidence="1">Catalyzes the formation of phosphatidylethanolamine (PtdEtn) from phosphatidylserine (PtdSer).</text>
</comment>
<comment type="catalytic activity">
    <reaction evidence="1">
        <text>a 1,2-diacyl-sn-glycero-3-phospho-L-serine + H(+) = a 1,2-diacyl-sn-glycero-3-phosphoethanolamine + CO2</text>
        <dbReference type="Rhea" id="RHEA:20828"/>
        <dbReference type="ChEBI" id="CHEBI:15378"/>
        <dbReference type="ChEBI" id="CHEBI:16526"/>
        <dbReference type="ChEBI" id="CHEBI:57262"/>
        <dbReference type="ChEBI" id="CHEBI:64612"/>
        <dbReference type="EC" id="4.1.1.65"/>
    </reaction>
</comment>
<comment type="cofactor">
    <cofactor evidence="1">
        <name>pyruvate</name>
        <dbReference type="ChEBI" id="CHEBI:15361"/>
    </cofactor>
    <text evidence="1">Binds 1 pyruvoyl group covalently per subunit.</text>
</comment>
<comment type="pathway">
    <text evidence="1">Phospholipid metabolism; phosphatidylethanolamine biosynthesis; phosphatidylethanolamine from CDP-diacylglycerol: step 2/2.</text>
</comment>
<comment type="subunit">
    <text evidence="1">Heterodimer of a large membrane-associated beta subunit and a small pyruvoyl-containing alpha subunit.</text>
</comment>
<comment type="subcellular location">
    <subcellularLocation>
        <location evidence="1">Cell membrane</location>
        <topology evidence="1">Peripheral membrane protein</topology>
    </subcellularLocation>
</comment>
<comment type="PTM">
    <text evidence="1">Is synthesized initially as an inactive proenzyme. Formation of the active enzyme involves a self-maturation process in which the active site pyruvoyl group is generated from an internal serine residue via an autocatalytic post-translational modification. Two non-identical subunits are generated from the proenzyme in this reaction, and the pyruvate is formed at the N-terminus of the alpha chain, which is derived from the carboxyl end of the proenzyme. The autoendoproteolytic cleavage occurs by a canonical serine protease mechanism, in which the side chain hydroxyl group of the serine supplies its oxygen atom to form the C-terminus of the beta chain, while the remainder of the serine residue undergoes an oxidative deamination to produce ammonia and the pyruvoyl prosthetic group on the alpha chain. During this reaction, the Ser that is part of the protease active site of the proenzyme becomes the pyruvoyl prosthetic group, which constitutes an essential element of the active site of the mature decarboxylase.</text>
</comment>
<comment type="similarity">
    <text evidence="1">Belongs to the phosphatidylserine decarboxylase family. PSD-B subfamily. Prokaryotic type I sub-subfamily.</text>
</comment>
<proteinExistence type="inferred from homology"/>
<protein>
    <recommendedName>
        <fullName evidence="1">Phosphatidylserine decarboxylase proenzyme</fullName>
        <ecNumber evidence="1">4.1.1.65</ecNumber>
    </recommendedName>
    <component>
        <recommendedName>
            <fullName evidence="1">Phosphatidylserine decarboxylase alpha chain</fullName>
        </recommendedName>
    </component>
    <component>
        <recommendedName>
            <fullName evidence="1">Phosphatidylserine decarboxylase beta chain</fullName>
        </recommendedName>
    </component>
</protein>
<name>PSD_ECO5E</name>
<keyword id="KW-1003">Cell membrane</keyword>
<keyword id="KW-0210">Decarboxylase</keyword>
<keyword id="KW-0444">Lipid biosynthesis</keyword>
<keyword id="KW-0443">Lipid metabolism</keyword>
<keyword id="KW-0456">Lyase</keyword>
<keyword id="KW-0472">Membrane</keyword>
<keyword id="KW-0594">Phospholipid biosynthesis</keyword>
<keyword id="KW-1208">Phospholipid metabolism</keyword>
<keyword id="KW-0670">Pyruvate</keyword>
<keyword id="KW-0865">Zymogen</keyword>
<feature type="chain" id="PRO_1000131360" description="Phosphatidylserine decarboxylase beta chain" evidence="1">
    <location>
        <begin position="1"/>
        <end position="253"/>
    </location>
</feature>
<feature type="chain" id="PRO_1000131361" description="Phosphatidylserine decarboxylase alpha chain" evidence="1">
    <location>
        <begin position="254"/>
        <end position="322"/>
    </location>
</feature>
<feature type="region of interest" description="Disordered" evidence="2">
    <location>
        <begin position="293"/>
        <end position="322"/>
    </location>
</feature>
<feature type="compositionally biased region" description="Basic and acidic residues" evidence="2">
    <location>
        <begin position="308"/>
        <end position="322"/>
    </location>
</feature>
<feature type="active site" description="Charge relay system; for autoendoproteolytic cleavage activity" evidence="1">
    <location>
        <position position="90"/>
    </location>
</feature>
<feature type="active site" description="Charge relay system; for autoendoproteolytic cleavage activity" evidence="1">
    <location>
        <position position="147"/>
    </location>
</feature>
<feature type="active site" description="Charge relay system; for autoendoproteolytic cleavage activity" evidence="1">
    <location>
        <position position="254"/>
    </location>
</feature>
<feature type="active site" description="Schiff-base intermediate with substrate; via pyruvic acid; for decarboxylase activity" evidence="1">
    <location>
        <position position="254"/>
    </location>
</feature>
<feature type="site" description="Cleavage (non-hydrolytic); by autocatalysis" evidence="1">
    <location>
        <begin position="253"/>
        <end position="254"/>
    </location>
</feature>
<feature type="modified residue" description="Pyruvic acid (Ser); by autocatalysis" evidence="1">
    <location>
        <position position="254"/>
    </location>
</feature>
<reference key="1">
    <citation type="journal article" date="2011" name="Proc. Natl. Acad. Sci. U.S.A.">
        <title>Genomic anatomy of Escherichia coli O157:H7 outbreaks.</title>
        <authorList>
            <person name="Eppinger M."/>
            <person name="Mammel M.K."/>
            <person name="Leclerc J.E."/>
            <person name="Ravel J."/>
            <person name="Cebula T.A."/>
        </authorList>
    </citation>
    <scope>NUCLEOTIDE SEQUENCE [LARGE SCALE GENOMIC DNA]</scope>
    <source>
        <strain>EC4115 / EHEC</strain>
    </source>
</reference>
<gene>
    <name evidence="1" type="primary">psd</name>
    <name type="ordered locus">ECH74115_5676</name>
</gene>
<organism>
    <name type="scientific">Escherichia coli O157:H7 (strain EC4115 / EHEC)</name>
    <dbReference type="NCBI Taxonomy" id="444450"/>
    <lineage>
        <taxon>Bacteria</taxon>
        <taxon>Pseudomonadati</taxon>
        <taxon>Pseudomonadota</taxon>
        <taxon>Gammaproteobacteria</taxon>
        <taxon>Enterobacterales</taxon>
        <taxon>Enterobacteriaceae</taxon>
        <taxon>Escherichia</taxon>
    </lineage>
</organism>
<sequence length="322" mass="35934">MLNSFKLSLQYILPKLWLTRLAGWGASKRAGWLTKLVIDLFVKYYKVDMKEAQKPDTASYRTFNEFFVRPLRDEVRPIDTDPNVLVMPADGVISQLGKIEEDKILQAKGHNYSLEALLAGNYLMADLFRNGTFVTTYLSPRDYHRVHMPCNGILREMIYVPGDLFSVNHLTAQNVPNLFARNERVICLFDTEFGPMAQILVGATIVGSIETVWAGTITPPREGIIKRWTWPAGENDGSVALLKGQEMGRFKLGSTVINLFAPGKVNLVEQLESLSVTKIGQPLAVSTETFVTPDAEPAPLPAEEIEAEHDASPLVDDKKDQV</sequence>
<evidence type="ECO:0000255" key="1">
    <source>
        <dbReference type="HAMAP-Rule" id="MF_00662"/>
    </source>
</evidence>
<evidence type="ECO:0000256" key="2">
    <source>
        <dbReference type="SAM" id="MobiDB-lite"/>
    </source>
</evidence>
<dbReference type="EC" id="4.1.1.65" evidence="1"/>
<dbReference type="EMBL" id="CP001164">
    <property type="protein sequence ID" value="ACI38647.1"/>
    <property type="molecule type" value="Genomic_DNA"/>
</dbReference>
<dbReference type="SMR" id="B5Z2G9"/>
<dbReference type="KEGG" id="ecf:ECH74115_5676"/>
<dbReference type="HOGENOM" id="CLU_029061_4_1_6"/>
<dbReference type="UniPathway" id="UPA00558">
    <property type="reaction ID" value="UER00616"/>
</dbReference>
<dbReference type="GO" id="GO:0005886">
    <property type="term" value="C:plasma membrane"/>
    <property type="evidence" value="ECO:0007669"/>
    <property type="project" value="UniProtKB-SubCell"/>
</dbReference>
<dbReference type="GO" id="GO:0004609">
    <property type="term" value="F:phosphatidylserine decarboxylase activity"/>
    <property type="evidence" value="ECO:0007669"/>
    <property type="project" value="UniProtKB-UniRule"/>
</dbReference>
<dbReference type="GO" id="GO:0006646">
    <property type="term" value="P:phosphatidylethanolamine biosynthetic process"/>
    <property type="evidence" value="ECO:0007669"/>
    <property type="project" value="UniProtKB-UniRule"/>
</dbReference>
<dbReference type="HAMAP" id="MF_00662">
    <property type="entry name" value="PS_decarb_PSD_B_type1"/>
    <property type="match status" value="1"/>
</dbReference>
<dbReference type="InterPro" id="IPR003817">
    <property type="entry name" value="PS_Dcarbxylase"/>
</dbReference>
<dbReference type="InterPro" id="IPR033177">
    <property type="entry name" value="PSD-B"/>
</dbReference>
<dbReference type="InterPro" id="IPR033178">
    <property type="entry name" value="PSD_type1_pro"/>
</dbReference>
<dbReference type="NCBIfam" id="TIGR00163">
    <property type="entry name" value="PS_decarb"/>
    <property type="match status" value="1"/>
</dbReference>
<dbReference type="PANTHER" id="PTHR10067">
    <property type="entry name" value="PHOSPHATIDYLSERINE DECARBOXYLASE"/>
    <property type="match status" value="1"/>
</dbReference>
<dbReference type="PANTHER" id="PTHR10067:SF6">
    <property type="entry name" value="PHOSPHATIDYLSERINE DECARBOXYLASE PROENZYME, MITOCHONDRIAL"/>
    <property type="match status" value="1"/>
</dbReference>
<dbReference type="Pfam" id="PF02666">
    <property type="entry name" value="PS_Dcarbxylase"/>
    <property type="match status" value="1"/>
</dbReference>